<gene>
    <name evidence="1" type="primary">proA</name>
    <name type="ordered locus">stu1710</name>
</gene>
<name>PROA_STRT2</name>
<organism>
    <name type="scientific">Streptococcus thermophilus (strain ATCC BAA-250 / LMG 18311)</name>
    <dbReference type="NCBI Taxonomy" id="264199"/>
    <lineage>
        <taxon>Bacteria</taxon>
        <taxon>Bacillati</taxon>
        <taxon>Bacillota</taxon>
        <taxon>Bacilli</taxon>
        <taxon>Lactobacillales</taxon>
        <taxon>Streptococcaceae</taxon>
        <taxon>Streptococcus</taxon>
    </lineage>
</organism>
<proteinExistence type="inferred from homology"/>
<feature type="chain" id="PRO_0000189796" description="Gamma-glutamyl phosphate reductase">
    <location>
        <begin position="1"/>
        <end position="416"/>
    </location>
</feature>
<evidence type="ECO:0000255" key="1">
    <source>
        <dbReference type="HAMAP-Rule" id="MF_00412"/>
    </source>
</evidence>
<dbReference type="EC" id="1.2.1.41" evidence="1"/>
<dbReference type="EMBL" id="CP000023">
    <property type="protein sequence ID" value="AAV61309.1"/>
    <property type="molecule type" value="Genomic_DNA"/>
</dbReference>
<dbReference type="RefSeq" id="WP_011226515.1">
    <property type="nucleotide sequence ID" value="NC_006448.1"/>
</dbReference>
<dbReference type="SMR" id="Q5M2U1"/>
<dbReference type="STRING" id="264199.stu1710"/>
<dbReference type="KEGG" id="stl:stu1710"/>
<dbReference type="PATRIC" id="fig|264199.4.peg.1681"/>
<dbReference type="eggNOG" id="COG0014">
    <property type="taxonomic scope" value="Bacteria"/>
</dbReference>
<dbReference type="HOGENOM" id="CLU_030231_0_0_9"/>
<dbReference type="UniPathway" id="UPA00098">
    <property type="reaction ID" value="UER00360"/>
</dbReference>
<dbReference type="Proteomes" id="UP000001170">
    <property type="component" value="Chromosome"/>
</dbReference>
<dbReference type="GO" id="GO:0005737">
    <property type="term" value="C:cytoplasm"/>
    <property type="evidence" value="ECO:0007669"/>
    <property type="project" value="UniProtKB-SubCell"/>
</dbReference>
<dbReference type="GO" id="GO:0004350">
    <property type="term" value="F:glutamate-5-semialdehyde dehydrogenase activity"/>
    <property type="evidence" value="ECO:0007669"/>
    <property type="project" value="UniProtKB-UniRule"/>
</dbReference>
<dbReference type="GO" id="GO:0050661">
    <property type="term" value="F:NADP binding"/>
    <property type="evidence" value="ECO:0007669"/>
    <property type="project" value="InterPro"/>
</dbReference>
<dbReference type="GO" id="GO:0055129">
    <property type="term" value="P:L-proline biosynthetic process"/>
    <property type="evidence" value="ECO:0007669"/>
    <property type="project" value="UniProtKB-UniRule"/>
</dbReference>
<dbReference type="CDD" id="cd07079">
    <property type="entry name" value="ALDH_F18-19_ProA-GPR"/>
    <property type="match status" value="1"/>
</dbReference>
<dbReference type="FunFam" id="3.40.309.10:FF:000006">
    <property type="entry name" value="Gamma-glutamyl phosphate reductase"/>
    <property type="match status" value="1"/>
</dbReference>
<dbReference type="Gene3D" id="3.40.605.10">
    <property type="entry name" value="Aldehyde Dehydrogenase, Chain A, domain 1"/>
    <property type="match status" value="1"/>
</dbReference>
<dbReference type="Gene3D" id="3.40.309.10">
    <property type="entry name" value="Aldehyde Dehydrogenase, Chain A, domain 2"/>
    <property type="match status" value="1"/>
</dbReference>
<dbReference type="HAMAP" id="MF_00412">
    <property type="entry name" value="ProA"/>
    <property type="match status" value="1"/>
</dbReference>
<dbReference type="InterPro" id="IPR016161">
    <property type="entry name" value="Ald_DH/histidinol_DH"/>
</dbReference>
<dbReference type="InterPro" id="IPR016163">
    <property type="entry name" value="Ald_DH_C"/>
</dbReference>
<dbReference type="InterPro" id="IPR016162">
    <property type="entry name" value="Ald_DH_N"/>
</dbReference>
<dbReference type="InterPro" id="IPR015590">
    <property type="entry name" value="Aldehyde_DH_dom"/>
</dbReference>
<dbReference type="InterPro" id="IPR020593">
    <property type="entry name" value="G-glutamylP_reductase_CS"/>
</dbReference>
<dbReference type="InterPro" id="IPR012134">
    <property type="entry name" value="Glu-5-SA_DH"/>
</dbReference>
<dbReference type="InterPro" id="IPR000965">
    <property type="entry name" value="GPR_dom"/>
</dbReference>
<dbReference type="NCBIfam" id="NF001221">
    <property type="entry name" value="PRK00197.1"/>
    <property type="match status" value="1"/>
</dbReference>
<dbReference type="NCBIfam" id="TIGR00407">
    <property type="entry name" value="proA"/>
    <property type="match status" value="1"/>
</dbReference>
<dbReference type="PANTHER" id="PTHR11063:SF8">
    <property type="entry name" value="DELTA-1-PYRROLINE-5-CARBOXYLATE SYNTHASE"/>
    <property type="match status" value="1"/>
</dbReference>
<dbReference type="PANTHER" id="PTHR11063">
    <property type="entry name" value="GLUTAMATE SEMIALDEHYDE DEHYDROGENASE"/>
    <property type="match status" value="1"/>
</dbReference>
<dbReference type="Pfam" id="PF00171">
    <property type="entry name" value="Aldedh"/>
    <property type="match status" value="2"/>
</dbReference>
<dbReference type="PIRSF" id="PIRSF000151">
    <property type="entry name" value="GPR"/>
    <property type="match status" value="1"/>
</dbReference>
<dbReference type="SUPFAM" id="SSF53720">
    <property type="entry name" value="ALDH-like"/>
    <property type="match status" value="1"/>
</dbReference>
<dbReference type="PROSITE" id="PS01223">
    <property type="entry name" value="PROA"/>
    <property type="match status" value="1"/>
</dbReference>
<reference key="1">
    <citation type="journal article" date="2004" name="Nat. Biotechnol.">
        <title>Complete sequence and comparative genome analysis of the dairy bacterium Streptococcus thermophilus.</title>
        <authorList>
            <person name="Bolotin A."/>
            <person name="Quinquis B."/>
            <person name="Renault P."/>
            <person name="Sorokin A."/>
            <person name="Ehrlich S.D."/>
            <person name="Kulakauskas S."/>
            <person name="Lapidus A."/>
            <person name="Goltsman E."/>
            <person name="Mazur M."/>
            <person name="Pusch G.D."/>
            <person name="Fonstein M."/>
            <person name="Overbeek R."/>
            <person name="Kyprides N."/>
            <person name="Purnelle B."/>
            <person name="Prozzi D."/>
            <person name="Ngui K."/>
            <person name="Masuy D."/>
            <person name="Hancy F."/>
            <person name="Burteau S."/>
            <person name="Boutry M."/>
            <person name="Delcour J."/>
            <person name="Goffeau A."/>
            <person name="Hols P."/>
        </authorList>
    </citation>
    <scope>NUCLEOTIDE SEQUENCE [LARGE SCALE GENOMIC DNA]</scope>
    <source>
        <strain>ATCC BAA-250 / LMG 18311</strain>
    </source>
</reference>
<comment type="function">
    <text evidence="1">Catalyzes the NADPH-dependent reduction of L-glutamate 5-phosphate into L-glutamate 5-semialdehyde and phosphate. The product spontaneously undergoes cyclization to form 1-pyrroline-5-carboxylate.</text>
</comment>
<comment type="catalytic activity">
    <reaction evidence="1">
        <text>L-glutamate 5-semialdehyde + phosphate + NADP(+) = L-glutamyl 5-phosphate + NADPH + H(+)</text>
        <dbReference type="Rhea" id="RHEA:19541"/>
        <dbReference type="ChEBI" id="CHEBI:15378"/>
        <dbReference type="ChEBI" id="CHEBI:43474"/>
        <dbReference type="ChEBI" id="CHEBI:57783"/>
        <dbReference type="ChEBI" id="CHEBI:58066"/>
        <dbReference type="ChEBI" id="CHEBI:58274"/>
        <dbReference type="ChEBI" id="CHEBI:58349"/>
        <dbReference type="EC" id="1.2.1.41"/>
    </reaction>
</comment>
<comment type="pathway">
    <text evidence="1">Amino-acid biosynthesis; L-proline biosynthesis; L-glutamate 5-semialdehyde from L-glutamate: step 2/2.</text>
</comment>
<comment type="subcellular location">
    <subcellularLocation>
        <location evidence="1">Cytoplasm</location>
    </subcellularLocation>
</comment>
<comment type="similarity">
    <text evidence="1">Belongs to the gamma-glutamyl phosphate reductase family.</text>
</comment>
<protein>
    <recommendedName>
        <fullName evidence="1">Gamma-glutamyl phosphate reductase</fullName>
        <shortName evidence="1">GPR</shortName>
        <ecNumber evidence="1">1.2.1.41</ecNumber>
    </recommendedName>
    <alternativeName>
        <fullName evidence="1">Glutamate-5-semialdehyde dehydrogenase</fullName>
    </alternativeName>
    <alternativeName>
        <fullName evidence="1">Glutamyl-gamma-semialdehyde dehydrogenase</fullName>
        <shortName evidence="1">GSA dehydrogenase</shortName>
    </alternativeName>
</protein>
<keyword id="KW-0028">Amino-acid biosynthesis</keyword>
<keyword id="KW-0963">Cytoplasm</keyword>
<keyword id="KW-0521">NADP</keyword>
<keyword id="KW-0560">Oxidoreductase</keyword>
<keyword id="KW-0641">Proline biosynthesis</keyword>
<keyword id="KW-1185">Reference proteome</keyword>
<sequence>MTYIDTLGQQAKVASRQIAKLSTAAKNDLLNQVAKALVAESDYIITENAKDMANASENGISKIMQDRLLLTEDRIAGIAEGVRQVADLQDPIGQVVRGYTNLDGLKIVQKRVPMGVIAMIFESRPNVSIDAFSLAFKTNNAIILRGGRDAINSNKALVTVARKALKNAGITADAVQFVEDTSHEVAEELMVATKYVDLLIPRGGARLIQTVKEKAKVPVIETGVGNCHIYVDKYANLDMATQIVINAKTQRPSVCNAAESLVVHADIVEEFLPNLEKAILKIQSVEFRADERALKLMEKAVPASPEDFATEFLDYIMSVKVVDSLDEAINWINTYTTSHSEAIVTQDISRAEQFQDDVDAAAVYVNASTRFTDGFVFGLGAEIGISTQKMHARGPMGLEALTSTKFYINGQGQIRE</sequence>
<accession>Q5M2U1</accession>